<proteinExistence type="inferred from homology"/>
<dbReference type="EMBL" id="CP000302">
    <property type="protein sequence ID" value="ABE54839.1"/>
    <property type="molecule type" value="Genomic_DNA"/>
</dbReference>
<dbReference type="RefSeq" id="WP_011495997.1">
    <property type="nucleotide sequence ID" value="NC_007954.1"/>
</dbReference>
<dbReference type="SMR" id="Q12NY7"/>
<dbReference type="STRING" id="318161.Sden_1554"/>
<dbReference type="KEGG" id="sdn:Sden_1554"/>
<dbReference type="eggNOG" id="COG0052">
    <property type="taxonomic scope" value="Bacteria"/>
</dbReference>
<dbReference type="HOGENOM" id="CLU_040318_1_0_6"/>
<dbReference type="OrthoDB" id="9808036at2"/>
<dbReference type="Proteomes" id="UP000001982">
    <property type="component" value="Chromosome"/>
</dbReference>
<dbReference type="GO" id="GO:0022627">
    <property type="term" value="C:cytosolic small ribosomal subunit"/>
    <property type="evidence" value="ECO:0007669"/>
    <property type="project" value="TreeGrafter"/>
</dbReference>
<dbReference type="GO" id="GO:0003735">
    <property type="term" value="F:structural constituent of ribosome"/>
    <property type="evidence" value="ECO:0007669"/>
    <property type="project" value="InterPro"/>
</dbReference>
<dbReference type="GO" id="GO:0006412">
    <property type="term" value="P:translation"/>
    <property type="evidence" value="ECO:0007669"/>
    <property type="project" value="UniProtKB-UniRule"/>
</dbReference>
<dbReference type="CDD" id="cd01425">
    <property type="entry name" value="RPS2"/>
    <property type="match status" value="1"/>
</dbReference>
<dbReference type="FunFam" id="1.10.287.610:FF:000001">
    <property type="entry name" value="30S ribosomal protein S2"/>
    <property type="match status" value="1"/>
</dbReference>
<dbReference type="Gene3D" id="3.40.50.10490">
    <property type="entry name" value="Glucose-6-phosphate isomerase like protein, domain 1"/>
    <property type="match status" value="1"/>
</dbReference>
<dbReference type="Gene3D" id="1.10.287.610">
    <property type="entry name" value="Helix hairpin bin"/>
    <property type="match status" value="1"/>
</dbReference>
<dbReference type="HAMAP" id="MF_00291_B">
    <property type="entry name" value="Ribosomal_uS2_B"/>
    <property type="match status" value="1"/>
</dbReference>
<dbReference type="InterPro" id="IPR001865">
    <property type="entry name" value="Ribosomal_uS2"/>
</dbReference>
<dbReference type="InterPro" id="IPR005706">
    <property type="entry name" value="Ribosomal_uS2_bac/mit/plastid"/>
</dbReference>
<dbReference type="InterPro" id="IPR018130">
    <property type="entry name" value="Ribosomal_uS2_CS"/>
</dbReference>
<dbReference type="InterPro" id="IPR023591">
    <property type="entry name" value="Ribosomal_uS2_flav_dom_sf"/>
</dbReference>
<dbReference type="NCBIfam" id="TIGR01011">
    <property type="entry name" value="rpsB_bact"/>
    <property type="match status" value="1"/>
</dbReference>
<dbReference type="PANTHER" id="PTHR12534">
    <property type="entry name" value="30S RIBOSOMAL PROTEIN S2 PROKARYOTIC AND ORGANELLAR"/>
    <property type="match status" value="1"/>
</dbReference>
<dbReference type="PANTHER" id="PTHR12534:SF0">
    <property type="entry name" value="SMALL RIBOSOMAL SUBUNIT PROTEIN US2M"/>
    <property type="match status" value="1"/>
</dbReference>
<dbReference type="Pfam" id="PF00318">
    <property type="entry name" value="Ribosomal_S2"/>
    <property type="match status" value="1"/>
</dbReference>
<dbReference type="PRINTS" id="PR00395">
    <property type="entry name" value="RIBOSOMALS2"/>
</dbReference>
<dbReference type="SUPFAM" id="SSF52313">
    <property type="entry name" value="Ribosomal protein S2"/>
    <property type="match status" value="1"/>
</dbReference>
<dbReference type="PROSITE" id="PS00962">
    <property type="entry name" value="RIBOSOMAL_S2_1"/>
    <property type="match status" value="1"/>
</dbReference>
<dbReference type="PROSITE" id="PS00963">
    <property type="entry name" value="RIBOSOMAL_S2_2"/>
    <property type="match status" value="1"/>
</dbReference>
<protein>
    <recommendedName>
        <fullName evidence="1">Small ribosomal subunit protein uS2</fullName>
    </recommendedName>
    <alternativeName>
        <fullName evidence="2">30S ribosomal protein S2</fullName>
    </alternativeName>
</protein>
<accession>Q12NY7</accession>
<feature type="chain" id="PRO_1000004063" description="Small ribosomal subunit protein uS2">
    <location>
        <begin position="1"/>
        <end position="242"/>
    </location>
</feature>
<name>RS2_SHEDO</name>
<reference key="1">
    <citation type="submission" date="2006-03" db="EMBL/GenBank/DDBJ databases">
        <title>Complete sequence of Shewanella denitrificans OS217.</title>
        <authorList>
            <consortium name="US DOE Joint Genome Institute"/>
            <person name="Copeland A."/>
            <person name="Lucas S."/>
            <person name="Lapidus A."/>
            <person name="Barry K."/>
            <person name="Detter J.C."/>
            <person name="Glavina del Rio T."/>
            <person name="Hammon N."/>
            <person name="Israni S."/>
            <person name="Dalin E."/>
            <person name="Tice H."/>
            <person name="Pitluck S."/>
            <person name="Brettin T."/>
            <person name="Bruce D."/>
            <person name="Han C."/>
            <person name="Tapia R."/>
            <person name="Gilna P."/>
            <person name="Kiss H."/>
            <person name="Schmutz J."/>
            <person name="Larimer F."/>
            <person name="Land M."/>
            <person name="Hauser L."/>
            <person name="Kyrpides N."/>
            <person name="Lykidis A."/>
            <person name="Richardson P."/>
        </authorList>
    </citation>
    <scope>NUCLEOTIDE SEQUENCE [LARGE SCALE GENOMIC DNA]</scope>
    <source>
        <strain>OS217 / ATCC BAA-1090 / DSM 15013</strain>
    </source>
</reference>
<evidence type="ECO:0000255" key="1">
    <source>
        <dbReference type="HAMAP-Rule" id="MF_00291"/>
    </source>
</evidence>
<evidence type="ECO:0000305" key="2"/>
<keyword id="KW-1185">Reference proteome</keyword>
<keyword id="KW-0687">Ribonucleoprotein</keyword>
<keyword id="KW-0689">Ribosomal protein</keyword>
<organism>
    <name type="scientific">Shewanella denitrificans (strain OS217 / ATCC BAA-1090 / DSM 15013)</name>
    <dbReference type="NCBI Taxonomy" id="318161"/>
    <lineage>
        <taxon>Bacteria</taxon>
        <taxon>Pseudomonadati</taxon>
        <taxon>Pseudomonadota</taxon>
        <taxon>Gammaproteobacteria</taxon>
        <taxon>Alteromonadales</taxon>
        <taxon>Shewanellaceae</taxon>
        <taxon>Shewanella</taxon>
    </lineage>
</organism>
<gene>
    <name evidence="1" type="primary">rpsB</name>
    <name type="ordered locus">Sden_1554</name>
</gene>
<comment type="similarity">
    <text evidence="1">Belongs to the universal ribosomal protein uS2 family.</text>
</comment>
<sequence length="242" mass="26571">MTTVTMRDMLQAGVHFGHQTRYWNPKMKPFIFGARNGVHIINLEHTVPMFNEALAFISNVASKKGKVLFVGTKRAAGEAIKESALSCDQYYVDHRWLGGMLTNWKTVRQSIKRLKELESQSVDGTFDKLTKKEALMRTRELEKLEKSLGGIKNMGGLPDVLFVIGADHEHIAIKEANNLGIPVVAVVDTNSAPDGVNYIVPGNDDAMRAIRLYTSSVAAAANSGRGQDLAVQAEQDGFVEAV</sequence>